<evidence type="ECO:0000255" key="1">
    <source>
        <dbReference type="HAMAP-Rule" id="MF_00059"/>
    </source>
</evidence>
<sequence length="312" mass="34826">MIEFEKPNITVVDQEEAYGKFVVEPLERGFGTTLGNSLRRVLLTSIPGTALSYIQIDGVLHEFSTVPGVREDVTKIILNLKKLELKSLSDEEKIAEIDVTGPAIVTAADLKVDSDIEVLNPDQYICSIADGGHLHMNVAIKNGRGYVPASENKTDDMPIGVIPVDSLFSPIKKVNYQVESARVGKRDDYDKLTLEIWTDGSITPNDALSFAAKILVEHFKVFMSTDMDAQFDDVMVEKEDDKNEKKLEMTIEELDLSVRSYNCLKRAGINTVQELTDKSEADMMRVRNLGRKSLEEVKNKLAELGLSLRQDD</sequence>
<reference key="1">
    <citation type="journal article" date="2006" name="Proc. Natl. Acad. Sci. U.S.A.">
        <title>Comparative genomics of the lactic acid bacteria.</title>
        <authorList>
            <person name="Makarova K.S."/>
            <person name="Slesarev A."/>
            <person name="Wolf Y.I."/>
            <person name="Sorokin A."/>
            <person name="Mirkin B."/>
            <person name="Koonin E.V."/>
            <person name="Pavlov A."/>
            <person name="Pavlova N."/>
            <person name="Karamychev V."/>
            <person name="Polouchine N."/>
            <person name="Shakhova V."/>
            <person name="Grigoriev I."/>
            <person name="Lou Y."/>
            <person name="Rohksar D."/>
            <person name="Lucas S."/>
            <person name="Huang K."/>
            <person name="Goodstein D.M."/>
            <person name="Hawkins T."/>
            <person name="Plengvidhya V."/>
            <person name="Welker D."/>
            <person name="Hughes J."/>
            <person name="Goh Y."/>
            <person name="Benson A."/>
            <person name="Baldwin K."/>
            <person name="Lee J.-H."/>
            <person name="Diaz-Muniz I."/>
            <person name="Dosti B."/>
            <person name="Smeianov V."/>
            <person name="Wechter W."/>
            <person name="Barabote R."/>
            <person name="Lorca G."/>
            <person name="Altermann E."/>
            <person name="Barrangou R."/>
            <person name="Ganesan B."/>
            <person name="Xie Y."/>
            <person name="Rawsthorne H."/>
            <person name="Tamir D."/>
            <person name="Parker C."/>
            <person name="Breidt F."/>
            <person name="Broadbent J.R."/>
            <person name="Hutkins R."/>
            <person name="O'Sullivan D."/>
            <person name="Steele J."/>
            <person name="Unlu G."/>
            <person name="Saier M.H. Jr."/>
            <person name="Klaenhammer T."/>
            <person name="Richardson P."/>
            <person name="Kozyavkin S."/>
            <person name="Weimer B.C."/>
            <person name="Mills D.A."/>
        </authorList>
    </citation>
    <scope>NUCLEOTIDE SEQUENCE [LARGE SCALE GENOMIC DNA]</scope>
    <source>
        <strain>ATCC 33323 / DSM 20243 / BCRC 14619 / CIP 102991 / JCM 1131 / KCTC 3163 / NCIMB 11718 / NCTC 13722 / AM63</strain>
    </source>
</reference>
<dbReference type="EC" id="2.7.7.6" evidence="1"/>
<dbReference type="EMBL" id="CP000413">
    <property type="protein sequence ID" value="ABJ59722.1"/>
    <property type="molecule type" value="Genomic_DNA"/>
</dbReference>
<dbReference type="RefSeq" id="WP_003647812.1">
    <property type="nucleotide sequence ID" value="NZ_WBMG01000001.1"/>
</dbReference>
<dbReference type="SMR" id="Q046A0"/>
<dbReference type="GeneID" id="29639232"/>
<dbReference type="KEGG" id="lga:LGAS_0316"/>
<dbReference type="HOGENOM" id="CLU_053084_0_1_9"/>
<dbReference type="BioCyc" id="LGAS324831:G1G6Y-315-MONOMER"/>
<dbReference type="Proteomes" id="UP000000664">
    <property type="component" value="Chromosome"/>
</dbReference>
<dbReference type="GO" id="GO:0005737">
    <property type="term" value="C:cytoplasm"/>
    <property type="evidence" value="ECO:0007669"/>
    <property type="project" value="UniProtKB-ARBA"/>
</dbReference>
<dbReference type="GO" id="GO:0000428">
    <property type="term" value="C:DNA-directed RNA polymerase complex"/>
    <property type="evidence" value="ECO:0007669"/>
    <property type="project" value="UniProtKB-KW"/>
</dbReference>
<dbReference type="GO" id="GO:0003677">
    <property type="term" value="F:DNA binding"/>
    <property type="evidence" value="ECO:0007669"/>
    <property type="project" value="UniProtKB-UniRule"/>
</dbReference>
<dbReference type="GO" id="GO:0003899">
    <property type="term" value="F:DNA-directed RNA polymerase activity"/>
    <property type="evidence" value="ECO:0007669"/>
    <property type="project" value="UniProtKB-UniRule"/>
</dbReference>
<dbReference type="GO" id="GO:0046983">
    <property type="term" value="F:protein dimerization activity"/>
    <property type="evidence" value="ECO:0007669"/>
    <property type="project" value="InterPro"/>
</dbReference>
<dbReference type="GO" id="GO:0006351">
    <property type="term" value="P:DNA-templated transcription"/>
    <property type="evidence" value="ECO:0007669"/>
    <property type="project" value="UniProtKB-UniRule"/>
</dbReference>
<dbReference type="CDD" id="cd06928">
    <property type="entry name" value="RNAP_alpha_NTD"/>
    <property type="match status" value="1"/>
</dbReference>
<dbReference type="FunFam" id="1.10.150.20:FF:000001">
    <property type="entry name" value="DNA-directed RNA polymerase subunit alpha"/>
    <property type="match status" value="1"/>
</dbReference>
<dbReference type="FunFam" id="2.170.120.12:FF:000001">
    <property type="entry name" value="DNA-directed RNA polymerase subunit alpha"/>
    <property type="match status" value="1"/>
</dbReference>
<dbReference type="Gene3D" id="1.10.150.20">
    <property type="entry name" value="5' to 3' exonuclease, C-terminal subdomain"/>
    <property type="match status" value="1"/>
</dbReference>
<dbReference type="Gene3D" id="2.170.120.12">
    <property type="entry name" value="DNA-directed RNA polymerase, insert domain"/>
    <property type="match status" value="1"/>
</dbReference>
<dbReference type="Gene3D" id="3.30.1360.10">
    <property type="entry name" value="RNA polymerase, RBP11-like subunit"/>
    <property type="match status" value="1"/>
</dbReference>
<dbReference type="HAMAP" id="MF_00059">
    <property type="entry name" value="RNApol_bact_RpoA"/>
    <property type="match status" value="1"/>
</dbReference>
<dbReference type="InterPro" id="IPR011262">
    <property type="entry name" value="DNA-dir_RNA_pol_insert"/>
</dbReference>
<dbReference type="InterPro" id="IPR011263">
    <property type="entry name" value="DNA-dir_RNA_pol_RpoA/D/Rpb3"/>
</dbReference>
<dbReference type="InterPro" id="IPR011773">
    <property type="entry name" value="DNA-dir_RpoA"/>
</dbReference>
<dbReference type="InterPro" id="IPR036603">
    <property type="entry name" value="RBP11-like"/>
</dbReference>
<dbReference type="InterPro" id="IPR011260">
    <property type="entry name" value="RNAP_asu_C"/>
</dbReference>
<dbReference type="InterPro" id="IPR036643">
    <property type="entry name" value="RNApol_insert_sf"/>
</dbReference>
<dbReference type="NCBIfam" id="NF003513">
    <property type="entry name" value="PRK05182.1-2"/>
    <property type="match status" value="1"/>
</dbReference>
<dbReference type="NCBIfam" id="NF003515">
    <property type="entry name" value="PRK05182.2-1"/>
    <property type="match status" value="1"/>
</dbReference>
<dbReference type="NCBIfam" id="NF003516">
    <property type="entry name" value="PRK05182.2-2"/>
    <property type="match status" value="1"/>
</dbReference>
<dbReference type="NCBIfam" id="NF003519">
    <property type="entry name" value="PRK05182.2-5"/>
    <property type="match status" value="1"/>
</dbReference>
<dbReference type="NCBIfam" id="TIGR02027">
    <property type="entry name" value="rpoA"/>
    <property type="match status" value="1"/>
</dbReference>
<dbReference type="Pfam" id="PF01000">
    <property type="entry name" value="RNA_pol_A_bac"/>
    <property type="match status" value="1"/>
</dbReference>
<dbReference type="Pfam" id="PF03118">
    <property type="entry name" value="RNA_pol_A_CTD"/>
    <property type="match status" value="1"/>
</dbReference>
<dbReference type="Pfam" id="PF01193">
    <property type="entry name" value="RNA_pol_L"/>
    <property type="match status" value="1"/>
</dbReference>
<dbReference type="SMART" id="SM00662">
    <property type="entry name" value="RPOLD"/>
    <property type="match status" value="1"/>
</dbReference>
<dbReference type="SUPFAM" id="SSF47789">
    <property type="entry name" value="C-terminal domain of RNA polymerase alpha subunit"/>
    <property type="match status" value="1"/>
</dbReference>
<dbReference type="SUPFAM" id="SSF56553">
    <property type="entry name" value="Insert subdomain of RNA polymerase alpha subunit"/>
    <property type="match status" value="1"/>
</dbReference>
<dbReference type="SUPFAM" id="SSF55257">
    <property type="entry name" value="RBP11-like subunits of RNA polymerase"/>
    <property type="match status" value="1"/>
</dbReference>
<gene>
    <name evidence="1" type="primary">rpoA</name>
    <name type="ordered locus">LGAS_0316</name>
</gene>
<feature type="chain" id="PRO_0000296823" description="DNA-directed RNA polymerase subunit alpha">
    <location>
        <begin position="1"/>
        <end position="312"/>
    </location>
</feature>
<feature type="region of interest" description="Alpha N-terminal domain (alpha-NTD)" evidence="1">
    <location>
        <begin position="1"/>
        <end position="226"/>
    </location>
</feature>
<feature type="region of interest" description="Alpha C-terminal domain (alpha-CTD)" evidence="1">
    <location>
        <begin position="243"/>
        <end position="312"/>
    </location>
</feature>
<organism>
    <name type="scientific">Lactobacillus gasseri (strain ATCC 33323 / DSM 20243 / BCRC 14619 / CIP 102991 / JCM 1131 / KCTC 3163 / NCIMB 11718 / NCTC 13722 / AM63)</name>
    <dbReference type="NCBI Taxonomy" id="324831"/>
    <lineage>
        <taxon>Bacteria</taxon>
        <taxon>Bacillati</taxon>
        <taxon>Bacillota</taxon>
        <taxon>Bacilli</taxon>
        <taxon>Lactobacillales</taxon>
        <taxon>Lactobacillaceae</taxon>
        <taxon>Lactobacillus</taxon>
    </lineage>
</organism>
<comment type="function">
    <text evidence="1">DNA-dependent RNA polymerase catalyzes the transcription of DNA into RNA using the four ribonucleoside triphosphates as substrates.</text>
</comment>
<comment type="catalytic activity">
    <reaction evidence="1">
        <text>RNA(n) + a ribonucleoside 5'-triphosphate = RNA(n+1) + diphosphate</text>
        <dbReference type="Rhea" id="RHEA:21248"/>
        <dbReference type="Rhea" id="RHEA-COMP:14527"/>
        <dbReference type="Rhea" id="RHEA-COMP:17342"/>
        <dbReference type="ChEBI" id="CHEBI:33019"/>
        <dbReference type="ChEBI" id="CHEBI:61557"/>
        <dbReference type="ChEBI" id="CHEBI:140395"/>
        <dbReference type="EC" id="2.7.7.6"/>
    </reaction>
</comment>
<comment type="subunit">
    <text evidence="1">Homodimer. The RNAP catalytic core consists of 2 alpha, 1 beta, 1 beta' and 1 omega subunit. When a sigma factor is associated with the core the holoenzyme is formed, which can initiate transcription.</text>
</comment>
<comment type="domain">
    <text evidence="1">The N-terminal domain is essential for RNAP assembly and basal transcription, whereas the C-terminal domain is involved in interaction with transcriptional regulators and with upstream promoter elements.</text>
</comment>
<comment type="similarity">
    <text evidence="1">Belongs to the RNA polymerase alpha chain family.</text>
</comment>
<accession>Q046A0</accession>
<name>RPOA_LACGA</name>
<keyword id="KW-0240">DNA-directed RNA polymerase</keyword>
<keyword id="KW-0548">Nucleotidyltransferase</keyword>
<keyword id="KW-0804">Transcription</keyword>
<keyword id="KW-0808">Transferase</keyword>
<protein>
    <recommendedName>
        <fullName evidence="1">DNA-directed RNA polymerase subunit alpha</fullName>
        <shortName evidence="1">RNAP subunit alpha</shortName>
        <ecNumber evidence="1">2.7.7.6</ecNumber>
    </recommendedName>
    <alternativeName>
        <fullName evidence="1">RNA polymerase subunit alpha</fullName>
    </alternativeName>
    <alternativeName>
        <fullName evidence="1">Transcriptase subunit alpha</fullName>
    </alternativeName>
</protein>
<proteinExistence type="inferred from homology"/>